<comment type="subcellular location">
    <subcellularLocation>
        <location evidence="3">Secreted</location>
    </subcellularLocation>
</comment>
<comment type="tissue specificity">
    <text evidence="3">Expressed by the venom duct.</text>
</comment>
<comment type="domain">
    <text evidence="3">The cysteine framework is XIV (C-C-C-C).</text>
</comment>
<comment type="PTM">
    <text evidence="3">Contains 2 disulfide bond.</text>
</comment>
<feature type="signal peptide" evidence="1">
    <location>
        <begin position="1"/>
        <end position="21"/>
    </location>
</feature>
<feature type="peptide" id="PRO_0000415034" description="Conotoxin Cl14.11" evidence="4">
    <location>
        <begin position="22"/>
        <end position="63"/>
    </location>
</feature>
<feature type="propeptide" id="PRO_0000415033" evidence="4">
    <location>
        <begin position="22"/>
        <end position="34"/>
    </location>
</feature>
<accession>D6C4I5</accession>
<keyword id="KW-1015">Disulfide bond</keyword>
<keyword id="KW-0528">Neurotoxin</keyword>
<keyword id="KW-0964">Secreted</keyword>
<keyword id="KW-0732">Signal</keyword>
<keyword id="KW-0800">Toxin</keyword>
<dbReference type="EMBL" id="FJ959127">
    <property type="protein sequence ID" value="ADB93097.1"/>
    <property type="molecule type" value="Genomic_DNA"/>
</dbReference>
<dbReference type="SMR" id="D6C4I5"/>
<dbReference type="ConoServer" id="4013">
    <property type="toxin name" value="Cal14.11 precursor"/>
</dbReference>
<dbReference type="GO" id="GO:0005576">
    <property type="term" value="C:extracellular region"/>
    <property type="evidence" value="ECO:0007669"/>
    <property type="project" value="UniProtKB-SubCell"/>
</dbReference>
<dbReference type="GO" id="GO:0090729">
    <property type="term" value="F:toxin activity"/>
    <property type="evidence" value="ECO:0007669"/>
    <property type="project" value="UniProtKB-KW"/>
</dbReference>
<reference key="1">
    <citation type="journal article" date="2010" name="Mol. Phylogenet. Evol.">
        <title>Evolution of Conus peptide toxins: analysis of Conus californicus Reeve, 1844.</title>
        <authorList>
            <person name="Biggs J.S."/>
            <person name="Watkins M."/>
            <person name="Puillandre N."/>
            <person name="Ownby J.P."/>
            <person name="Lopez-Vera E."/>
            <person name="Christensen S."/>
            <person name="Moreno K.J."/>
            <person name="Bernaldez J."/>
            <person name="Licea-Navarro A."/>
            <person name="Corneli P.S."/>
            <person name="Olivera B.M."/>
        </authorList>
    </citation>
    <scope>NUCLEOTIDE SEQUENCE [GENOMIC DNA]</scope>
</reference>
<proteinExistence type="inferred from homology"/>
<protein>
    <recommendedName>
        <fullName evidence="2">Conotoxin Cl14.11</fullName>
    </recommendedName>
</protein>
<evidence type="ECO:0000255" key="1"/>
<evidence type="ECO:0000303" key="2">
    <source>
    </source>
</evidence>
<evidence type="ECO:0000305" key="3"/>
<evidence type="ECO:0000305" key="4">
    <source>
    </source>
</evidence>
<sequence>MRFLLLLTVALLLTCIMETDAEAKPEDLAERFRERSDCSGMSDGTSCGDTGVCQNGLCMGAGS</sequence>
<organism>
    <name type="scientific">Californiconus californicus</name>
    <name type="common">California cone</name>
    <name type="synonym">Conus californicus</name>
    <dbReference type="NCBI Taxonomy" id="1736779"/>
    <lineage>
        <taxon>Eukaryota</taxon>
        <taxon>Metazoa</taxon>
        <taxon>Spiralia</taxon>
        <taxon>Lophotrochozoa</taxon>
        <taxon>Mollusca</taxon>
        <taxon>Gastropoda</taxon>
        <taxon>Caenogastropoda</taxon>
        <taxon>Neogastropoda</taxon>
        <taxon>Conoidea</taxon>
        <taxon>Conidae</taxon>
        <taxon>Californiconus</taxon>
    </lineage>
</organism>
<name>CUEB_CONCL</name>